<reference key="1">
    <citation type="journal article" date="2003" name="Genome Res.">
        <title>Comparative genome analysis of Vibrio vulnificus, a marine pathogen.</title>
        <authorList>
            <person name="Chen C.-Y."/>
            <person name="Wu K.-M."/>
            <person name="Chang Y.-C."/>
            <person name="Chang C.-H."/>
            <person name="Tsai H.-C."/>
            <person name="Liao T.-L."/>
            <person name="Liu Y.-M."/>
            <person name="Chen H.-J."/>
            <person name="Shen A.B.-T."/>
            <person name="Li J.-C."/>
            <person name="Su T.-L."/>
            <person name="Shao C.-P."/>
            <person name="Lee C.-T."/>
            <person name="Hor L.-I."/>
            <person name="Tsai S.-F."/>
        </authorList>
    </citation>
    <scope>NUCLEOTIDE SEQUENCE [LARGE SCALE GENOMIC DNA]</scope>
    <source>
        <strain>YJ016</strain>
    </source>
</reference>
<keyword id="KW-0067">ATP-binding</keyword>
<keyword id="KW-0436">Ligase</keyword>
<keyword id="KW-0460">Magnesium</keyword>
<keyword id="KW-0479">Metal-binding</keyword>
<keyword id="KW-0547">Nucleotide-binding</keyword>
<keyword id="KW-0658">Purine biosynthesis</keyword>
<accession>Q7MK47</accession>
<gene>
    <name evidence="1" type="primary">purT</name>
    <name type="ordered locus">VV1963</name>
</gene>
<name>PURT_VIBVY</name>
<comment type="function">
    <text evidence="1">Involved in the de novo purine biosynthesis. Catalyzes the transfer of formate to 5-phospho-ribosyl-glycinamide (GAR), producing 5-phospho-ribosyl-N-formylglycinamide (FGAR). Formate is provided by PurU via hydrolysis of 10-formyl-tetrahydrofolate.</text>
</comment>
<comment type="catalytic activity">
    <reaction evidence="1">
        <text>N(1)-(5-phospho-beta-D-ribosyl)glycinamide + formate + ATP = N(2)-formyl-N(1)-(5-phospho-beta-D-ribosyl)glycinamide + ADP + phosphate + H(+)</text>
        <dbReference type="Rhea" id="RHEA:24829"/>
        <dbReference type="ChEBI" id="CHEBI:15378"/>
        <dbReference type="ChEBI" id="CHEBI:15740"/>
        <dbReference type="ChEBI" id="CHEBI:30616"/>
        <dbReference type="ChEBI" id="CHEBI:43474"/>
        <dbReference type="ChEBI" id="CHEBI:143788"/>
        <dbReference type="ChEBI" id="CHEBI:147286"/>
        <dbReference type="ChEBI" id="CHEBI:456216"/>
        <dbReference type="EC" id="6.3.1.21"/>
    </reaction>
    <physiologicalReaction direction="left-to-right" evidence="1">
        <dbReference type="Rhea" id="RHEA:24830"/>
    </physiologicalReaction>
</comment>
<comment type="pathway">
    <text evidence="1">Purine metabolism; IMP biosynthesis via de novo pathway; N(2)-formyl-N(1)-(5-phospho-D-ribosyl)glycinamide from N(1)-(5-phospho-D-ribosyl)glycinamide (formate route): step 1/1.</text>
</comment>
<comment type="subunit">
    <text evidence="1">Homodimer.</text>
</comment>
<comment type="similarity">
    <text evidence="1">Belongs to the PurK/PurT family.</text>
</comment>
<proteinExistence type="inferred from homology"/>
<sequence>MFGTATRESATRVLLLGSGELGKEVAIECQRLGLEVIACDRYPDAPAMQVAHRSYVFDMLDASELEKVIAAEQPAFVVPEIEAIATDKLVELEEQGLNVVPSAKATKLTMNREGIRRLAAEELGLTTSPYRFADNYQQFVEAVEAVSIPCVVKPVMSSSGKGQSVIKSPADIEKAWQYAQEGGRTGAGRVIVEGFIDFDYEITLLTVRAVDGVHFCAPIGHRQEDGDYRESWQPQQMSENAIKAAEYTAEQVVNALGGYGIFGVELFVKGDKVIFNEVSPRPHDTGLVTLISQEMSEFALHVRAFTGMPVNKIVQYGPSASAVILGNGQSENLRFDGMSDALEQPQTQLRLFGKPDINGRRRLGVVLTRRSSTEKAVDAAIESAKKIKIIY</sequence>
<evidence type="ECO:0000255" key="1">
    <source>
        <dbReference type="HAMAP-Rule" id="MF_01643"/>
    </source>
</evidence>
<organism>
    <name type="scientific">Vibrio vulnificus (strain YJ016)</name>
    <dbReference type="NCBI Taxonomy" id="196600"/>
    <lineage>
        <taxon>Bacteria</taxon>
        <taxon>Pseudomonadati</taxon>
        <taxon>Pseudomonadota</taxon>
        <taxon>Gammaproteobacteria</taxon>
        <taxon>Vibrionales</taxon>
        <taxon>Vibrionaceae</taxon>
        <taxon>Vibrio</taxon>
    </lineage>
</organism>
<dbReference type="EC" id="6.3.1.21" evidence="1"/>
<dbReference type="EMBL" id="BA000037">
    <property type="protein sequence ID" value="BAC94727.1"/>
    <property type="molecule type" value="Genomic_DNA"/>
</dbReference>
<dbReference type="RefSeq" id="WP_011080245.1">
    <property type="nucleotide sequence ID" value="NC_005139.1"/>
</dbReference>
<dbReference type="SMR" id="Q7MK47"/>
<dbReference type="STRING" id="672.VV93_v1c17230"/>
<dbReference type="KEGG" id="vvy:VV1963"/>
<dbReference type="PATRIC" id="fig|196600.6.peg.1991"/>
<dbReference type="eggNOG" id="COG0027">
    <property type="taxonomic scope" value="Bacteria"/>
</dbReference>
<dbReference type="HOGENOM" id="CLU_011534_1_3_6"/>
<dbReference type="UniPathway" id="UPA00074">
    <property type="reaction ID" value="UER00127"/>
</dbReference>
<dbReference type="Proteomes" id="UP000002675">
    <property type="component" value="Chromosome I"/>
</dbReference>
<dbReference type="GO" id="GO:0005829">
    <property type="term" value="C:cytosol"/>
    <property type="evidence" value="ECO:0007669"/>
    <property type="project" value="TreeGrafter"/>
</dbReference>
<dbReference type="GO" id="GO:0005524">
    <property type="term" value="F:ATP binding"/>
    <property type="evidence" value="ECO:0007669"/>
    <property type="project" value="UniProtKB-UniRule"/>
</dbReference>
<dbReference type="GO" id="GO:0000287">
    <property type="term" value="F:magnesium ion binding"/>
    <property type="evidence" value="ECO:0007669"/>
    <property type="project" value="InterPro"/>
</dbReference>
<dbReference type="GO" id="GO:0043815">
    <property type="term" value="F:phosphoribosylglycinamide formyltransferase 2 activity"/>
    <property type="evidence" value="ECO:0007669"/>
    <property type="project" value="UniProtKB-UniRule"/>
</dbReference>
<dbReference type="GO" id="GO:0004644">
    <property type="term" value="F:phosphoribosylglycinamide formyltransferase activity"/>
    <property type="evidence" value="ECO:0007669"/>
    <property type="project" value="InterPro"/>
</dbReference>
<dbReference type="GO" id="GO:0006189">
    <property type="term" value="P:'de novo' IMP biosynthetic process"/>
    <property type="evidence" value="ECO:0007669"/>
    <property type="project" value="UniProtKB-UniRule"/>
</dbReference>
<dbReference type="FunFam" id="3.30.1490.20:FF:000013">
    <property type="entry name" value="Formate-dependent phosphoribosylglycinamide formyltransferase"/>
    <property type="match status" value="1"/>
</dbReference>
<dbReference type="FunFam" id="3.30.470.20:FF:000027">
    <property type="entry name" value="Formate-dependent phosphoribosylglycinamide formyltransferase"/>
    <property type="match status" value="1"/>
</dbReference>
<dbReference type="FunFam" id="3.40.50.20:FF:000007">
    <property type="entry name" value="Formate-dependent phosphoribosylglycinamide formyltransferase"/>
    <property type="match status" value="1"/>
</dbReference>
<dbReference type="Gene3D" id="3.40.50.20">
    <property type="match status" value="1"/>
</dbReference>
<dbReference type="Gene3D" id="3.30.1490.20">
    <property type="entry name" value="ATP-grasp fold, A domain"/>
    <property type="match status" value="1"/>
</dbReference>
<dbReference type="Gene3D" id="3.30.470.20">
    <property type="entry name" value="ATP-grasp fold, B domain"/>
    <property type="match status" value="1"/>
</dbReference>
<dbReference type="HAMAP" id="MF_01643">
    <property type="entry name" value="PurT"/>
    <property type="match status" value="1"/>
</dbReference>
<dbReference type="InterPro" id="IPR011761">
    <property type="entry name" value="ATP-grasp"/>
</dbReference>
<dbReference type="InterPro" id="IPR003135">
    <property type="entry name" value="ATP-grasp_carboxylate-amine"/>
</dbReference>
<dbReference type="InterPro" id="IPR013815">
    <property type="entry name" value="ATP_grasp_subdomain_1"/>
</dbReference>
<dbReference type="InterPro" id="IPR016185">
    <property type="entry name" value="PreATP-grasp_dom_sf"/>
</dbReference>
<dbReference type="InterPro" id="IPR005862">
    <property type="entry name" value="PurT"/>
</dbReference>
<dbReference type="InterPro" id="IPR054350">
    <property type="entry name" value="PurT/PurK_preATP-grasp"/>
</dbReference>
<dbReference type="InterPro" id="IPR048740">
    <property type="entry name" value="PurT_C"/>
</dbReference>
<dbReference type="InterPro" id="IPR011054">
    <property type="entry name" value="Rudment_hybrid_motif"/>
</dbReference>
<dbReference type="NCBIfam" id="NF006766">
    <property type="entry name" value="PRK09288.1"/>
    <property type="match status" value="1"/>
</dbReference>
<dbReference type="NCBIfam" id="TIGR01142">
    <property type="entry name" value="purT"/>
    <property type="match status" value="1"/>
</dbReference>
<dbReference type="PANTHER" id="PTHR43055">
    <property type="entry name" value="FORMATE-DEPENDENT PHOSPHORIBOSYLGLYCINAMIDE FORMYLTRANSFERASE"/>
    <property type="match status" value="1"/>
</dbReference>
<dbReference type="PANTHER" id="PTHR43055:SF1">
    <property type="entry name" value="FORMATE-DEPENDENT PHOSPHORIBOSYLGLYCINAMIDE FORMYLTRANSFERASE"/>
    <property type="match status" value="1"/>
</dbReference>
<dbReference type="Pfam" id="PF02222">
    <property type="entry name" value="ATP-grasp"/>
    <property type="match status" value="1"/>
</dbReference>
<dbReference type="Pfam" id="PF21244">
    <property type="entry name" value="PurT_C"/>
    <property type="match status" value="1"/>
</dbReference>
<dbReference type="Pfam" id="PF22660">
    <property type="entry name" value="RS_preATP-grasp-like"/>
    <property type="match status" value="1"/>
</dbReference>
<dbReference type="SUPFAM" id="SSF56059">
    <property type="entry name" value="Glutathione synthetase ATP-binding domain-like"/>
    <property type="match status" value="1"/>
</dbReference>
<dbReference type="SUPFAM" id="SSF52440">
    <property type="entry name" value="PreATP-grasp domain"/>
    <property type="match status" value="1"/>
</dbReference>
<dbReference type="SUPFAM" id="SSF51246">
    <property type="entry name" value="Rudiment single hybrid motif"/>
    <property type="match status" value="1"/>
</dbReference>
<dbReference type="PROSITE" id="PS50975">
    <property type="entry name" value="ATP_GRASP"/>
    <property type="match status" value="1"/>
</dbReference>
<feature type="chain" id="PRO_0000319261" description="Formate-dependent phosphoribosylglycinamide formyltransferase">
    <location>
        <begin position="1"/>
        <end position="391"/>
    </location>
</feature>
<feature type="domain" description="ATP-grasp" evidence="1">
    <location>
        <begin position="117"/>
        <end position="306"/>
    </location>
</feature>
<feature type="binding site" evidence="1">
    <location>
        <begin position="20"/>
        <end position="21"/>
    </location>
    <ligand>
        <name>N(1)-(5-phospho-beta-D-ribosyl)glycinamide</name>
        <dbReference type="ChEBI" id="CHEBI:143788"/>
    </ligand>
</feature>
<feature type="binding site" evidence="1">
    <location>
        <position position="80"/>
    </location>
    <ligand>
        <name>N(1)-(5-phospho-beta-D-ribosyl)glycinamide</name>
        <dbReference type="ChEBI" id="CHEBI:143788"/>
    </ligand>
</feature>
<feature type="binding site" evidence="1">
    <location>
        <position position="112"/>
    </location>
    <ligand>
        <name>ATP</name>
        <dbReference type="ChEBI" id="CHEBI:30616"/>
    </ligand>
</feature>
<feature type="binding site" evidence="1">
    <location>
        <position position="153"/>
    </location>
    <ligand>
        <name>ATP</name>
        <dbReference type="ChEBI" id="CHEBI:30616"/>
    </ligand>
</feature>
<feature type="binding site" evidence="1">
    <location>
        <begin position="158"/>
        <end position="163"/>
    </location>
    <ligand>
        <name>ATP</name>
        <dbReference type="ChEBI" id="CHEBI:30616"/>
    </ligand>
</feature>
<feature type="binding site" evidence="1">
    <location>
        <begin position="193"/>
        <end position="196"/>
    </location>
    <ligand>
        <name>ATP</name>
        <dbReference type="ChEBI" id="CHEBI:30616"/>
    </ligand>
</feature>
<feature type="binding site" evidence="1">
    <location>
        <position position="201"/>
    </location>
    <ligand>
        <name>ATP</name>
        <dbReference type="ChEBI" id="CHEBI:30616"/>
    </ligand>
</feature>
<feature type="binding site" evidence="1">
    <location>
        <position position="265"/>
    </location>
    <ligand>
        <name>Mg(2+)</name>
        <dbReference type="ChEBI" id="CHEBI:18420"/>
    </ligand>
</feature>
<feature type="binding site" evidence="1">
    <location>
        <position position="277"/>
    </location>
    <ligand>
        <name>Mg(2+)</name>
        <dbReference type="ChEBI" id="CHEBI:18420"/>
    </ligand>
</feature>
<feature type="binding site" evidence="1">
    <location>
        <position position="284"/>
    </location>
    <ligand>
        <name>N(1)-(5-phospho-beta-D-ribosyl)glycinamide</name>
        <dbReference type="ChEBI" id="CHEBI:143788"/>
    </ligand>
</feature>
<feature type="binding site" evidence="1">
    <location>
        <position position="354"/>
    </location>
    <ligand>
        <name>N(1)-(5-phospho-beta-D-ribosyl)glycinamide</name>
        <dbReference type="ChEBI" id="CHEBI:143788"/>
    </ligand>
</feature>
<feature type="binding site" evidence="1">
    <location>
        <begin position="361"/>
        <end position="362"/>
    </location>
    <ligand>
        <name>N(1)-(5-phospho-beta-D-ribosyl)glycinamide</name>
        <dbReference type="ChEBI" id="CHEBI:143788"/>
    </ligand>
</feature>
<protein>
    <recommendedName>
        <fullName evidence="1">Formate-dependent phosphoribosylglycinamide formyltransferase</fullName>
        <ecNumber evidence="1">6.3.1.21</ecNumber>
    </recommendedName>
    <alternativeName>
        <fullName evidence="1">5'-phosphoribosylglycinamide transformylase 2</fullName>
    </alternativeName>
    <alternativeName>
        <fullName evidence="1">Formate-dependent GAR transformylase</fullName>
    </alternativeName>
    <alternativeName>
        <fullName evidence="1">GAR transformylase 2</fullName>
        <shortName evidence="1">GART 2</shortName>
    </alternativeName>
    <alternativeName>
        <fullName evidence="1">Non-folate glycinamide ribonucleotide transformylase</fullName>
    </alternativeName>
    <alternativeName>
        <fullName evidence="1">Phosphoribosylglycinamide formyltransferase 2</fullName>
    </alternativeName>
</protein>